<keyword id="KW-0067">ATP-binding</keyword>
<keyword id="KW-0460">Magnesium</keyword>
<keyword id="KW-0547">Nucleotide-binding</keyword>
<keyword id="KW-0808">Transferase</keyword>
<keyword id="KW-0819">tRNA processing</keyword>
<accession>Q9ZJJ7</accession>
<comment type="function">
    <text evidence="1">Catalyzes the transfer of a dimethylallyl group onto the adenine at position 37 in tRNAs that read codons beginning with uridine, leading to the formation of N6-(dimethylallyl)adenosine (i(6)A).</text>
</comment>
<comment type="catalytic activity">
    <reaction evidence="1">
        <text>adenosine(37) in tRNA + dimethylallyl diphosphate = N(6)-dimethylallyladenosine(37) in tRNA + diphosphate</text>
        <dbReference type="Rhea" id="RHEA:26482"/>
        <dbReference type="Rhea" id="RHEA-COMP:10162"/>
        <dbReference type="Rhea" id="RHEA-COMP:10375"/>
        <dbReference type="ChEBI" id="CHEBI:33019"/>
        <dbReference type="ChEBI" id="CHEBI:57623"/>
        <dbReference type="ChEBI" id="CHEBI:74411"/>
        <dbReference type="ChEBI" id="CHEBI:74415"/>
        <dbReference type="EC" id="2.5.1.75"/>
    </reaction>
</comment>
<comment type="cofactor">
    <cofactor evidence="1">
        <name>Mg(2+)</name>
        <dbReference type="ChEBI" id="CHEBI:18420"/>
    </cofactor>
</comment>
<comment type="subunit">
    <text evidence="1">Monomer.</text>
</comment>
<comment type="similarity">
    <text evidence="1">Belongs to the IPP transferase family.</text>
</comment>
<comment type="sequence caution" evidence="2">
    <conflict type="erroneous initiation">
        <sequence resource="EMBL-CDS" id="AAD06896"/>
    </conflict>
</comment>
<reference key="1">
    <citation type="journal article" date="1999" name="Nature">
        <title>Genomic sequence comparison of two unrelated isolates of the human gastric pathogen Helicobacter pylori.</title>
        <authorList>
            <person name="Alm R.A."/>
            <person name="Ling L.-S.L."/>
            <person name="Moir D.T."/>
            <person name="King B.L."/>
            <person name="Brown E.D."/>
            <person name="Doig P.C."/>
            <person name="Smith D.R."/>
            <person name="Noonan B."/>
            <person name="Guild B.C."/>
            <person name="deJonge B.L."/>
            <person name="Carmel G."/>
            <person name="Tummino P.J."/>
            <person name="Caruso A."/>
            <person name="Uria-Nickelsen M."/>
            <person name="Mills D.M."/>
            <person name="Ives C."/>
            <person name="Gibson R."/>
            <person name="Merberg D."/>
            <person name="Mills S.D."/>
            <person name="Jiang Q."/>
            <person name="Taylor D.E."/>
            <person name="Vovis G.F."/>
            <person name="Trust T.J."/>
        </authorList>
    </citation>
    <scope>NUCLEOTIDE SEQUENCE [LARGE SCALE GENOMIC DNA]</scope>
    <source>
        <strain>J99 / ATCC 700824</strain>
    </source>
</reference>
<dbReference type="EC" id="2.5.1.75" evidence="1"/>
<dbReference type="EMBL" id="AE001439">
    <property type="protein sequence ID" value="AAD06896.1"/>
    <property type="status" value="ALT_INIT"/>
    <property type="molecule type" value="Genomic_DNA"/>
</dbReference>
<dbReference type="PIR" id="G71822">
    <property type="entry name" value="G71822"/>
</dbReference>
<dbReference type="SMR" id="Q9ZJJ7"/>
<dbReference type="KEGG" id="hpj:jhp_1310"/>
<dbReference type="eggNOG" id="COG0324">
    <property type="taxonomic scope" value="Bacteria"/>
</dbReference>
<dbReference type="Proteomes" id="UP000000804">
    <property type="component" value="Chromosome"/>
</dbReference>
<dbReference type="GO" id="GO:0005524">
    <property type="term" value="F:ATP binding"/>
    <property type="evidence" value="ECO:0007669"/>
    <property type="project" value="UniProtKB-UniRule"/>
</dbReference>
<dbReference type="GO" id="GO:0052381">
    <property type="term" value="F:tRNA dimethylallyltransferase activity"/>
    <property type="evidence" value="ECO:0007669"/>
    <property type="project" value="UniProtKB-UniRule"/>
</dbReference>
<dbReference type="GO" id="GO:0006400">
    <property type="term" value="P:tRNA modification"/>
    <property type="evidence" value="ECO:0007669"/>
    <property type="project" value="TreeGrafter"/>
</dbReference>
<dbReference type="Gene3D" id="1.10.20.140">
    <property type="match status" value="1"/>
</dbReference>
<dbReference type="Gene3D" id="3.40.50.300">
    <property type="entry name" value="P-loop containing nucleotide triphosphate hydrolases"/>
    <property type="match status" value="1"/>
</dbReference>
<dbReference type="HAMAP" id="MF_00185">
    <property type="entry name" value="IPP_trans"/>
    <property type="match status" value="1"/>
</dbReference>
<dbReference type="InterPro" id="IPR039657">
    <property type="entry name" value="Dimethylallyltransferase"/>
</dbReference>
<dbReference type="InterPro" id="IPR018022">
    <property type="entry name" value="IPT"/>
</dbReference>
<dbReference type="InterPro" id="IPR027417">
    <property type="entry name" value="P-loop_NTPase"/>
</dbReference>
<dbReference type="NCBIfam" id="TIGR00174">
    <property type="entry name" value="miaA"/>
    <property type="match status" value="1"/>
</dbReference>
<dbReference type="PANTHER" id="PTHR11088">
    <property type="entry name" value="TRNA DIMETHYLALLYLTRANSFERASE"/>
    <property type="match status" value="1"/>
</dbReference>
<dbReference type="PANTHER" id="PTHR11088:SF60">
    <property type="entry name" value="TRNA DIMETHYLALLYLTRANSFERASE"/>
    <property type="match status" value="1"/>
</dbReference>
<dbReference type="Pfam" id="PF01715">
    <property type="entry name" value="IPPT"/>
    <property type="match status" value="1"/>
</dbReference>
<dbReference type="SUPFAM" id="SSF52540">
    <property type="entry name" value="P-loop containing nucleoside triphosphate hydrolases"/>
    <property type="match status" value="2"/>
</dbReference>
<evidence type="ECO:0000255" key="1">
    <source>
        <dbReference type="HAMAP-Rule" id="MF_00185"/>
    </source>
</evidence>
<evidence type="ECO:0000305" key="2"/>
<gene>
    <name evidence="1" type="primary">miaA</name>
    <name type="ordered locus">jhp_1310</name>
</gene>
<proteinExistence type="inferred from homology"/>
<feature type="chain" id="PRO_0000163926" description="tRNA dimethylallyltransferase">
    <location>
        <begin position="1"/>
        <end position="312"/>
    </location>
</feature>
<feature type="region of interest" description="Interaction with substrate tRNA" evidence="1">
    <location>
        <begin position="44"/>
        <end position="47"/>
    </location>
</feature>
<feature type="binding site" evidence="1">
    <location>
        <begin position="19"/>
        <end position="26"/>
    </location>
    <ligand>
        <name>ATP</name>
        <dbReference type="ChEBI" id="CHEBI:30616"/>
    </ligand>
</feature>
<feature type="binding site" evidence="1">
    <location>
        <begin position="21"/>
        <end position="26"/>
    </location>
    <ligand>
        <name>substrate</name>
    </ligand>
</feature>
<feature type="site" description="Interaction with substrate tRNA" evidence="1">
    <location>
        <position position="108"/>
    </location>
</feature>
<organism>
    <name type="scientific">Helicobacter pylori (strain J99 / ATCC 700824)</name>
    <name type="common">Campylobacter pylori J99</name>
    <dbReference type="NCBI Taxonomy" id="85963"/>
    <lineage>
        <taxon>Bacteria</taxon>
        <taxon>Pseudomonadati</taxon>
        <taxon>Campylobacterota</taxon>
        <taxon>Epsilonproteobacteria</taxon>
        <taxon>Campylobacterales</taxon>
        <taxon>Helicobacteraceae</taxon>
        <taxon>Helicobacter</taxon>
    </lineage>
</organism>
<protein>
    <recommendedName>
        <fullName evidence="1">tRNA dimethylallyltransferase</fullName>
        <ecNumber evidence="1">2.5.1.75</ecNumber>
    </recommendedName>
    <alternativeName>
        <fullName evidence="1">Dimethylallyl diphosphate:tRNA dimethylallyltransferase</fullName>
        <shortName evidence="1">DMAPP:tRNA dimethylallyltransferase</shortName>
        <shortName evidence="1">DMATase</shortName>
    </alternativeName>
    <alternativeName>
        <fullName evidence="1">Isopentenyl-diphosphate:tRNA isopentenyltransferase</fullName>
        <shortName evidence="1">IPP transferase</shortName>
        <shortName evidence="1">IPPT</shortName>
        <shortName evidence="1">IPTase</shortName>
    </alternativeName>
</protein>
<name>MIAA_HELPJ</name>
<sequence length="312" mass="35303">MIKEGFLIKTPKKLIALLGPSGSGKSALSIELAQELDAEIFSLDSLSIYEDINIASAKPSLKERKNIKHYALDYLNIDEKNNASLFKTLLEDAMRVSSKEILLIVGGSSFYLKSILEGLSGMPKLSDEEVVKIEREIATLSNPYIFLKSIDPNMAFKIHPNDTYRIHKALEIFYATHTPPSEYFKANPKKPFEHAISLFALSVEKNALANNIKQRTKSMLDCGLIEEIKALYIKYPKDSQPFKAIGVKESVLYLEKRLTLKELEEAIISNTMKLAKRQNTFNKTQFNNLYMGSVGEIRHAILKHSKSDTRER</sequence>